<name>COAD_THERP</name>
<evidence type="ECO:0000255" key="1">
    <source>
        <dbReference type="HAMAP-Rule" id="MF_00151"/>
    </source>
</evidence>
<feature type="chain" id="PRO_1000123309" description="Phosphopantetheine adenylyltransferase">
    <location>
        <begin position="1"/>
        <end position="167"/>
    </location>
</feature>
<feature type="binding site" evidence="1">
    <location>
        <begin position="10"/>
        <end position="11"/>
    </location>
    <ligand>
        <name>ATP</name>
        <dbReference type="ChEBI" id="CHEBI:30616"/>
    </ligand>
</feature>
<feature type="binding site" evidence="1">
    <location>
        <position position="10"/>
    </location>
    <ligand>
        <name>substrate</name>
    </ligand>
</feature>
<feature type="binding site" evidence="1">
    <location>
        <position position="18"/>
    </location>
    <ligand>
        <name>ATP</name>
        <dbReference type="ChEBI" id="CHEBI:30616"/>
    </ligand>
</feature>
<feature type="binding site" evidence="1">
    <location>
        <position position="77"/>
    </location>
    <ligand>
        <name>substrate</name>
    </ligand>
</feature>
<feature type="binding site" evidence="1">
    <location>
        <position position="91"/>
    </location>
    <ligand>
        <name>substrate</name>
    </ligand>
</feature>
<feature type="binding site" evidence="1">
    <location>
        <begin position="92"/>
        <end position="94"/>
    </location>
    <ligand>
        <name>ATP</name>
        <dbReference type="ChEBI" id="CHEBI:30616"/>
    </ligand>
</feature>
<feature type="binding site" evidence="1">
    <location>
        <position position="102"/>
    </location>
    <ligand>
        <name>ATP</name>
        <dbReference type="ChEBI" id="CHEBI:30616"/>
    </ligand>
</feature>
<feature type="binding site" evidence="1">
    <location>
        <begin position="127"/>
        <end position="133"/>
    </location>
    <ligand>
        <name>ATP</name>
        <dbReference type="ChEBI" id="CHEBI:30616"/>
    </ligand>
</feature>
<feature type="site" description="Transition state stabilizer" evidence="1">
    <location>
        <position position="18"/>
    </location>
</feature>
<reference key="1">
    <citation type="journal article" date="2009" name="PLoS ONE">
        <title>Complete genome sequence of the aerobic CO-oxidizing thermophile Thermomicrobium roseum.</title>
        <authorList>
            <person name="Wu D."/>
            <person name="Raymond J."/>
            <person name="Wu M."/>
            <person name="Chatterji S."/>
            <person name="Ren Q."/>
            <person name="Graham J.E."/>
            <person name="Bryant D.A."/>
            <person name="Robb F."/>
            <person name="Colman A."/>
            <person name="Tallon L.J."/>
            <person name="Badger J.H."/>
            <person name="Madupu R."/>
            <person name="Ward N.L."/>
            <person name="Eisen J.A."/>
        </authorList>
    </citation>
    <scope>NUCLEOTIDE SEQUENCE [LARGE SCALE GENOMIC DNA]</scope>
    <source>
        <strain>ATCC 27502 / DSM 5159 / P-2</strain>
    </source>
</reference>
<sequence length="167" mass="18575">MSHRALYPGTFDPITNGHVDVVQRAARLFDFLIVGIYAGHEGRAKQPLFSAEERRFLAEQALRHLPNVRVDVFSGLAVDYARAVGAQAIVRGLRAVSDFEYEFSLAHMYRHLAPDVDVVCLMTSSQYSFISSSMIKEVAQLGGNLTGLVPDHVAEALVQKFRTLVRE</sequence>
<organism>
    <name type="scientific">Thermomicrobium roseum (strain ATCC 27502 / DSM 5159 / P-2)</name>
    <dbReference type="NCBI Taxonomy" id="309801"/>
    <lineage>
        <taxon>Bacteria</taxon>
        <taxon>Pseudomonadati</taxon>
        <taxon>Thermomicrobiota</taxon>
        <taxon>Thermomicrobia</taxon>
        <taxon>Thermomicrobiales</taxon>
        <taxon>Thermomicrobiaceae</taxon>
        <taxon>Thermomicrobium</taxon>
    </lineage>
</organism>
<dbReference type="EC" id="2.7.7.3" evidence="1"/>
<dbReference type="EMBL" id="CP001275">
    <property type="protein sequence ID" value="ACM05333.1"/>
    <property type="molecule type" value="Genomic_DNA"/>
</dbReference>
<dbReference type="RefSeq" id="WP_012641511.1">
    <property type="nucleotide sequence ID" value="NC_011959.1"/>
</dbReference>
<dbReference type="SMR" id="B9L2B5"/>
<dbReference type="STRING" id="309801.trd_0097"/>
<dbReference type="KEGG" id="tro:trd_0097"/>
<dbReference type="eggNOG" id="COG0669">
    <property type="taxonomic scope" value="Bacteria"/>
</dbReference>
<dbReference type="HOGENOM" id="CLU_100149_0_1_0"/>
<dbReference type="OrthoDB" id="9806661at2"/>
<dbReference type="UniPathway" id="UPA00241">
    <property type="reaction ID" value="UER00355"/>
</dbReference>
<dbReference type="Proteomes" id="UP000000447">
    <property type="component" value="Chromosome"/>
</dbReference>
<dbReference type="GO" id="GO:0005737">
    <property type="term" value="C:cytoplasm"/>
    <property type="evidence" value="ECO:0007669"/>
    <property type="project" value="UniProtKB-SubCell"/>
</dbReference>
<dbReference type="GO" id="GO:0005524">
    <property type="term" value="F:ATP binding"/>
    <property type="evidence" value="ECO:0007669"/>
    <property type="project" value="UniProtKB-KW"/>
</dbReference>
<dbReference type="GO" id="GO:0004595">
    <property type="term" value="F:pantetheine-phosphate adenylyltransferase activity"/>
    <property type="evidence" value="ECO:0007669"/>
    <property type="project" value="UniProtKB-UniRule"/>
</dbReference>
<dbReference type="GO" id="GO:0015937">
    <property type="term" value="P:coenzyme A biosynthetic process"/>
    <property type="evidence" value="ECO:0007669"/>
    <property type="project" value="UniProtKB-UniRule"/>
</dbReference>
<dbReference type="CDD" id="cd02163">
    <property type="entry name" value="PPAT"/>
    <property type="match status" value="1"/>
</dbReference>
<dbReference type="Gene3D" id="3.40.50.620">
    <property type="entry name" value="HUPs"/>
    <property type="match status" value="1"/>
</dbReference>
<dbReference type="HAMAP" id="MF_00151">
    <property type="entry name" value="PPAT_bact"/>
    <property type="match status" value="1"/>
</dbReference>
<dbReference type="InterPro" id="IPR004821">
    <property type="entry name" value="Cyt_trans-like"/>
</dbReference>
<dbReference type="InterPro" id="IPR001980">
    <property type="entry name" value="PPAT"/>
</dbReference>
<dbReference type="InterPro" id="IPR014729">
    <property type="entry name" value="Rossmann-like_a/b/a_fold"/>
</dbReference>
<dbReference type="NCBIfam" id="TIGR01510">
    <property type="entry name" value="coaD_prev_kdtB"/>
    <property type="match status" value="1"/>
</dbReference>
<dbReference type="NCBIfam" id="TIGR00125">
    <property type="entry name" value="cyt_tran_rel"/>
    <property type="match status" value="1"/>
</dbReference>
<dbReference type="PANTHER" id="PTHR21342">
    <property type="entry name" value="PHOSPHOPANTETHEINE ADENYLYLTRANSFERASE"/>
    <property type="match status" value="1"/>
</dbReference>
<dbReference type="PANTHER" id="PTHR21342:SF1">
    <property type="entry name" value="PHOSPHOPANTETHEINE ADENYLYLTRANSFERASE"/>
    <property type="match status" value="1"/>
</dbReference>
<dbReference type="Pfam" id="PF01467">
    <property type="entry name" value="CTP_transf_like"/>
    <property type="match status" value="1"/>
</dbReference>
<dbReference type="PRINTS" id="PR01020">
    <property type="entry name" value="LPSBIOSNTHSS"/>
</dbReference>
<dbReference type="SUPFAM" id="SSF52374">
    <property type="entry name" value="Nucleotidylyl transferase"/>
    <property type="match status" value="1"/>
</dbReference>
<accession>B9L2B5</accession>
<comment type="function">
    <text evidence="1">Reversibly transfers an adenylyl group from ATP to 4'-phosphopantetheine, yielding dephospho-CoA (dPCoA) and pyrophosphate.</text>
</comment>
<comment type="catalytic activity">
    <reaction evidence="1">
        <text>(R)-4'-phosphopantetheine + ATP + H(+) = 3'-dephospho-CoA + diphosphate</text>
        <dbReference type="Rhea" id="RHEA:19801"/>
        <dbReference type="ChEBI" id="CHEBI:15378"/>
        <dbReference type="ChEBI" id="CHEBI:30616"/>
        <dbReference type="ChEBI" id="CHEBI:33019"/>
        <dbReference type="ChEBI" id="CHEBI:57328"/>
        <dbReference type="ChEBI" id="CHEBI:61723"/>
        <dbReference type="EC" id="2.7.7.3"/>
    </reaction>
</comment>
<comment type="cofactor">
    <cofactor evidence="1">
        <name>Mg(2+)</name>
        <dbReference type="ChEBI" id="CHEBI:18420"/>
    </cofactor>
</comment>
<comment type="pathway">
    <text evidence="1">Cofactor biosynthesis; coenzyme A biosynthesis; CoA from (R)-pantothenate: step 4/5.</text>
</comment>
<comment type="subunit">
    <text evidence="1">Homohexamer.</text>
</comment>
<comment type="subcellular location">
    <subcellularLocation>
        <location evidence="1">Cytoplasm</location>
    </subcellularLocation>
</comment>
<comment type="similarity">
    <text evidence="1">Belongs to the bacterial CoaD family.</text>
</comment>
<protein>
    <recommendedName>
        <fullName evidence="1">Phosphopantetheine adenylyltransferase</fullName>
        <ecNumber evidence="1">2.7.7.3</ecNumber>
    </recommendedName>
    <alternativeName>
        <fullName evidence="1">Dephospho-CoA pyrophosphorylase</fullName>
    </alternativeName>
    <alternativeName>
        <fullName evidence="1">Pantetheine-phosphate adenylyltransferase</fullName>
        <shortName evidence="1">PPAT</shortName>
    </alternativeName>
</protein>
<gene>
    <name evidence="1" type="primary">coaD</name>
    <name type="ordered locus">trd_0097</name>
</gene>
<keyword id="KW-0067">ATP-binding</keyword>
<keyword id="KW-0173">Coenzyme A biosynthesis</keyword>
<keyword id="KW-0963">Cytoplasm</keyword>
<keyword id="KW-0460">Magnesium</keyword>
<keyword id="KW-0547">Nucleotide-binding</keyword>
<keyword id="KW-0548">Nucleotidyltransferase</keyword>
<keyword id="KW-1185">Reference proteome</keyword>
<keyword id="KW-0808">Transferase</keyword>
<proteinExistence type="inferred from homology"/>